<protein>
    <recommendedName>
        <fullName evidence="1">Cytoplasmic tRNA 2-thiolation protein 1</fullName>
        <ecNumber evidence="1">2.7.7.-</ecNumber>
    </recommendedName>
    <alternativeName>
        <fullName evidence="1">Cytoplasmic tRNA adenylyltransferase 1</fullName>
    </alternativeName>
</protein>
<evidence type="ECO:0000255" key="1">
    <source>
        <dbReference type="HAMAP-Rule" id="MF_03053"/>
    </source>
</evidence>
<name>CTU1_KLULA</name>
<comment type="function">
    <text evidence="1">Plays a central role in 2-thiolation of mcm(5)S(2)U at tRNA wobble positions of tRNA(Lys), tRNA(Glu) and tRNA(Gln). Directly binds tRNAs and probably acts by catalyzing adenylation of tRNAs, an intermediate required for 2-thiolation. It is unclear whether it acts as a sulfurtransferase that transfers sulfur from thiocarboxylated URM1 onto the uridine of tRNAs at wobble position. Prior mcm(5) tRNA modification by the elongator complex is required for 2-thiolation. May also be involved in protein urmylation.</text>
</comment>
<comment type="pathway">
    <text evidence="1">tRNA modification; 5-methoxycarbonylmethyl-2-thiouridine-tRNA biosynthesis.</text>
</comment>
<comment type="subcellular location">
    <subcellularLocation>
        <location evidence="1">Cytoplasm</location>
    </subcellularLocation>
</comment>
<comment type="similarity">
    <text evidence="1">Belongs to the TtcA family. CTU1/NCS6/ATPBD3 subfamily.</text>
</comment>
<keyword id="KW-0963">Cytoplasm</keyword>
<keyword id="KW-1185">Reference proteome</keyword>
<keyword id="KW-0694">RNA-binding</keyword>
<keyword id="KW-0808">Transferase</keyword>
<keyword id="KW-0819">tRNA processing</keyword>
<keyword id="KW-0820">tRNA-binding</keyword>
<gene>
    <name evidence="1" type="primary">NCS6</name>
    <name evidence="1" type="synonym">CTU1</name>
    <name type="ordered locus">KLLA0B00737g</name>
</gene>
<sequence length="371" mass="41781">MFTPPTDPKKSVKVKVSQLCELCHARKAVMKRPKNLQRICKECFFSVFETEIHNTIVSNNLFHRGERIAVGASGGKDSTVLAYVLKLLNDRHDYGVEIVLLSIDEGIVGYRDDSLATVKRNQVQYDLPLEIVSYKDLYNWTMDEIVACAGIRNSCTYCGVFRRQALDRGAAKLGIKHVVTGHNADDMAETVLMNILRGDVARLEKSTSILTQSSGSPIKRSKPFKYSYQKEIVLYAHYKKLDYFSTECSYAPEAFRGTARELMKNLEAIRPSCIIDIIHSGESLKLKPKRAKKAPPPSHMEIRPDGSVSLQNEFIDGNRCERCGYLSSNKICKACMLLEGLEQNRAKIQLEKDSTTEGAAKLSRTLEKLQF</sequence>
<organism>
    <name type="scientific">Kluyveromyces lactis (strain ATCC 8585 / CBS 2359 / DSM 70799 / NBRC 1267 / NRRL Y-1140 / WM37)</name>
    <name type="common">Yeast</name>
    <name type="synonym">Candida sphaerica</name>
    <dbReference type="NCBI Taxonomy" id="284590"/>
    <lineage>
        <taxon>Eukaryota</taxon>
        <taxon>Fungi</taxon>
        <taxon>Dikarya</taxon>
        <taxon>Ascomycota</taxon>
        <taxon>Saccharomycotina</taxon>
        <taxon>Saccharomycetes</taxon>
        <taxon>Saccharomycetales</taxon>
        <taxon>Saccharomycetaceae</taxon>
        <taxon>Kluyveromyces</taxon>
    </lineage>
</organism>
<feature type="chain" id="PRO_0000368262" description="Cytoplasmic tRNA 2-thiolation protein 1">
    <location>
        <begin position="1"/>
        <end position="371"/>
    </location>
</feature>
<accession>Q6CWX6</accession>
<proteinExistence type="inferred from homology"/>
<dbReference type="EC" id="2.7.7.-" evidence="1"/>
<dbReference type="EMBL" id="CR382122">
    <property type="protein sequence ID" value="CAH01956.1"/>
    <property type="molecule type" value="Genomic_DNA"/>
</dbReference>
<dbReference type="RefSeq" id="XP_451563.1">
    <property type="nucleotide sequence ID" value="XM_451563.1"/>
</dbReference>
<dbReference type="SMR" id="Q6CWX6"/>
<dbReference type="FunCoup" id="Q6CWX6">
    <property type="interactions" value="470"/>
</dbReference>
<dbReference type="STRING" id="284590.Q6CWX6"/>
<dbReference type="PaxDb" id="284590-Q6CWX6"/>
<dbReference type="KEGG" id="kla:KLLA0_B00737g"/>
<dbReference type="eggNOG" id="KOG2840">
    <property type="taxonomic scope" value="Eukaryota"/>
</dbReference>
<dbReference type="HOGENOM" id="CLU_026481_1_2_1"/>
<dbReference type="InParanoid" id="Q6CWX6"/>
<dbReference type="OMA" id="MGKCERC"/>
<dbReference type="UniPathway" id="UPA00988"/>
<dbReference type="Proteomes" id="UP000000598">
    <property type="component" value="Chromosome B"/>
</dbReference>
<dbReference type="GO" id="GO:0005829">
    <property type="term" value="C:cytosol"/>
    <property type="evidence" value="ECO:0000250"/>
    <property type="project" value="UniProtKB"/>
</dbReference>
<dbReference type="GO" id="GO:0002144">
    <property type="term" value="C:cytosolic tRNA wobble base thiouridylase complex"/>
    <property type="evidence" value="ECO:0007669"/>
    <property type="project" value="TreeGrafter"/>
</dbReference>
<dbReference type="GO" id="GO:0005739">
    <property type="term" value="C:mitochondrion"/>
    <property type="evidence" value="ECO:0007669"/>
    <property type="project" value="TreeGrafter"/>
</dbReference>
<dbReference type="GO" id="GO:0016779">
    <property type="term" value="F:nucleotidyltransferase activity"/>
    <property type="evidence" value="ECO:0007669"/>
    <property type="project" value="UniProtKB-UniRule"/>
</dbReference>
<dbReference type="GO" id="GO:0000049">
    <property type="term" value="F:tRNA binding"/>
    <property type="evidence" value="ECO:0000250"/>
    <property type="project" value="UniProtKB"/>
</dbReference>
<dbReference type="GO" id="GO:0032447">
    <property type="term" value="P:protein urmylation"/>
    <property type="evidence" value="ECO:0007669"/>
    <property type="project" value="UniProtKB-UniRule"/>
</dbReference>
<dbReference type="GO" id="GO:0034227">
    <property type="term" value="P:tRNA thio-modification"/>
    <property type="evidence" value="ECO:0000250"/>
    <property type="project" value="UniProtKB"/>
</dbReference>
<dbReference type="GO" id="GO:0002143">
    <property type="term" value="P:tRNA wobble position uridine thiolation"/>
    <property type="evidence" value="ECO:0007669"/>
    <property type="project" value="TreeGrafter"/>
</dbReference>
<dbReference type="GO" id="GO:0002098">
    <property type="term" value="P:tRNA wobble uridine modification"/>
    <property type="evidence" value="ECO:0000250"/>
    <property type="project" value="UniProtKB"/>
</dbReference>
<dbReference type="CDD" id="cd01713">
    <property type="entry name" value="CTU1-like"/>
    <property type="match status" value="1"/>
</dbReference>
<dbReference type="FunFam" id="3.40.50.620:FF:000188">
    <property type="entry name" value="Cytoplasmic tRNA 2-thiolation protein 1"/>
    <property type="match status" value="1"/>
</dbReference>
<dbReference type="Gene3D" id="3.40.50.620">
    <property type="entry name" value="HUPs"/>
    <property type="match status" value="1"/>
</dbReference>
<dbReference type="HAMAP" id="MF_03053">
    <property type="entry name" value="CTU1"/>
    <property type="match status" value="1"/>
</dbReference>
<dbReference type="InterPro" id="IPR056369">
    <property type="entry name" value="CTU1-like_ATP-bd"/>
</dbReference>
<dbReference type="InterPro" id="IPR032442">
    <property type="entry name" value="CTU1_C"/>
</dbReference>
<dbReference type="InterPro" id="IPR000541">
    <property type="entry name" value="Ncs6/Tuc1/Ctu1"/>
</dbReference>
<dbReference type="InterPro" id="IPR014729">
    <property type="entry name" value="Rossmann-like_a/b/a_fold"/>
</dbReference>
<dbReference type="InterPro" id="IPR011063">
    <property type="entry name" value="TilS/TtcA_N"/>
</dbReference>
<dbReference type="InterPro" id="IPR035107">
    <property type="entry name" value="tRNA_thiolation_TtcA_Ctu1"/>
</dbReference>
<dbReference type="InterPro" id="IPR020554">
    <property type="entry name" value="UPF0021_CS"/>
</dbReference>
<dbReference type="PANTHER" id="PTHR11807">
    <property type="entry name" value="ATPASES OF THE PP SUPERFAMILY-RELATED"/>
    <property type="match status" value="1"/>
</dbReference>
<dbReference type="PANTHER" id="PTHR11807:SF12">
    <property type="entry name" value="CYTOPLASMIC TRNA 2-THIOLATION PROTEIN 1"/>
    <property type="match status" value="1"/>
</dbReference>
<dbReference type="Pfam" id="PF01171">
    <property type="entry name" value="ATP_bind_3"/>
    <property type="match status" value="1"/>
</dbReference>
<dbReference type="Pfam" id="PF16503">
    <property type="entry name" value="zn-ribbon_14"/>
    <property type="match status" value="1"/>
</dbReference>
<dbReference type="PIRSF" id="PIRSF004976">
    <property type="entry name" value="ATPase_YdaO"/>
    <property type="match status" value="1"/>
</dbReference>
<dbReference type="SUPFAM" id="SSF52402">
    <property type="entry name" value="Adenine nucleotide alpha hydrolases-like"/>
    <property type="match status" value="1"/>
</dbReference>
<dbReference type="PROSITE" id="PS01263">
    <property type="entry name" value="UPF0021"/>
    <property type="match status" value="1"/>
</dbReference>
<reference key="1">
    <citation type="journal article" date="2004" name="Nature">
        <title>Genome evolution in yeasts.</title>
        <authorList>
            <person name="Dujon B."/>
            <person name="Sherman D."/>
            <person name="Fischer G."/>
            <person name="Durrens P."/>
            <person name="Casaregola S."/>
            <person name="Lafontaine I."/>
            <person name="de Montigny J."/>
            <person name="Marck C."/>
            <person name="Neuveglise C."/>
            <person name="Talla E."/>
            <person name="Goffard N."/>
            <person name="Frangeul L."/>
            <person name="Aigle M."/>
            <person name="Anthouard V."/>
            <person name="Babour A."/>
            <person name="Barbe V."/>
            <person name="Barnay S."/>
            <person name="Blanchin S."/>
            <person name="Beckerich J.-M."/>
            <person name="Beyne E."/>
            <person name="Bleykasten C."/>
            <person name="Boisrame A."/>
            <person name="Boyer J."/>
            <person name="Cattolico L."/>
            <person name="Confanioleri F."/>
            <person name="de Daruvar A."/>
            <person name="Despons L."/>
            <person name="Fabre E."/>
            <person name="Fairhead C."/>
            <person name="Ferry-Dumazet H."/>
            <person name="Groppi A."/>
            <person name="Hantraye F."/>
            <person name="Hennequin C."/>
            <person name="Jauniaux N."/>
            <person name="Joyet P."/>
            <person name="Kachouri R."/>
            <person name="Kerrest A."/>
            <person name="Koszul R."/>
            <person name="Lemaire M."/>
            <person name="Lesur I."/>
            <person name="Ma L."/>
            <person name="Muller H."/>
            <person name="Nicaud J.-M."/>
            <person name="Nikolski M."/>
            <person name="Oztas S."/>
            <person name="Ozier-Kalogeropoulos O."/>
            <person name="Pellenz S."/>
            <person name="Potier S."/>
            <person name="Richard G.-F."/>
            <person name="Straub M.-L."/>
            <person name="Suleau A."/>
            <person name="Swennen D."/>
            <person name="Tekaia F."/>
            <person name="Wesolowski-Louvel M."/>
            <person name="Westhof E."/>
            <person name="Wirth B."/>
            <person name="Zeniou-Meyer M."/>
            <person name="Zivanovic Y."/>
            <person name="Bolotin-Fukuhara M."/>
            <person name="Thierry A."/>
            <person name="Bouchier C."/>
            <person name="Caudron B."/>
            <person name="Scarpelli C."/>
            <person name="Gaillardin C."/>
            <person name="Weissenbach J."/>
            <person name="Wincker P."/>
            <person name="Souciet J.-L."/>
        </authorList>
    </citation>
    <scope>NUCLEOTIDE SEQUENCE [LARGE SCALE GENOMIC DNA]</scope>
    <source>
        <strain>ATCC 8585 / CBS 2359 / DSM 70799 / NBRC 1267 / NRRL Y-1140 / WM37</strain>
    </source>
</reference>